<feature type="chain" id="PRO_1000047209" description="Thiopurine S-methyltransferase">
    <location>
        <begin position="1"/>
        <end position="218"/>
    </location>
</feature>
<feature type="binding site" evidence="1">
    <location>
        <position position="10"/>
    </location>
    <ligand>
        <name>S-adenosyl-L-methionine</name>
        <dbReference type="ChEBI" id="CHEBI:59789"/>
    </ligand>
</feature>
<feature type="binding site" evidence="1">
    <location>
        <position position="45"/>
    </location>
    <ligand>
        <name>S-adenosyl-L-methionine</name>
        <dbReference type="ChEBI" id="CHEBI:59789"/>
    </ligand>
</feature>
<feature type="binding site" evidence="1">
    <location>
        <position position="66"/>
    </location>
    <ligand>
        <name>S-adenosyl-L-methionine</name>
        <dbReference type="ChEBI" id="CHEBI:59789"/>
    </ligand>
</feature>
<feature type="binding site" evidence="1">
    <location>
        <position position="123"/>
    </location>
    <ligand>
        <name>S-adenosyl-L-methionine</name>
        <dbReference type="ChEBI" id="CHEBI:59789"/>
    </ligand>
</feature>
<sequence>MQADFWHARWANNQIGFHLDEVNPYLMRHLSRLRLQAGEQVLVPLCGKTLDLAWLAAQGLDVLGVELSEKAVSDFFAENGLQPAIDQMDGFRRYRAAGITLLQGDFFALQSGHLAGCRAFYDRAALIALPPDMRERYAGHLQAILPARSLGLLVTIDYPQGEMAGPPFAVPDAEVREHYAAGWRIEELERGDVLGVNWKFLERGVSWLNEAVYLLQRG</sequence>
<evidence type="ECO:0000255" key="1">
    <source>
        <dbReference type="HAMAP-Rule" id="MF_00812"/>
    </source>
</evidence>
<organism>
    <name type="scientific">Pseudomonas paraeruginosa (strain DSM 24068 / PA7)</name>
    <name type="common">Pseudomonas aeruginosa (strain PA7)</name>
    <dbReference type="NCBI Taxonomy" id="381754"/>
    <lineage>
        <taxon>Bacteria</taxon>
        <taxon>Pseudomonadati</taxon>
        <taxon>Pseudomonadota</taxon>
        <taxon>Gammaproteobacteria</taxon>
        <taxon>Pseudomonadales</taxon>
        <taxon>Pseudomonadaceae</taxon>
        <taxon>Pseudomonas</taxon>
        <taxon>Pseudomonas paraeruginosa</taxon>
    </lineage>
</organism>
<name>TPMT_PSEP7</name>
<keyword id="KW-0963">Cytoplasm</keyword>
<keyword id="KW-0489">Methyltransferase</keyword>
<keyword id="KW-0949">S-adenosyl-L-methionine</keyword>
<keyword id="KW-0808">Transferase</keyword>
<dbReference type="EC" id="2.1.1.67" evidence="1"/>
<dbReference type="EMBL" id="CP000744">
    <property type="protein sequence ID" value="ABR85531.1"/>
    <property type="molecule type" value="Genomic_DNA"/>
</dbReference>
<dbReference type="RefSeq" id="WP_003156222.1">
    <property type="nucleotide sequence ID" value="NC_009656.1"/>
</dbReference>
<dbReference type="SMR" id="A6V3Q8"/>
<dbReference type="KEGG" id="pap:PSPA7_2323"/>
<dbReference type="HOGENOM" id="CLU_085515_1_0_6"/>
<dbReference type="Proteomes" id="UP000001582">
    <property type="component" value="Chromosome"/>
</dbReference>
<dbReference type="GO" id="GO:0005737">
    <property type="term" value="C:cytoplasm"/>
    <property type="evidence" value="ECO:0007669"/>
    <property type="project" value="UniProtKB-SubCell"/>
</dbReference>
<dbReference type="GO" id="GO:0008119">
    <property type="term" value="F:thiopurine S-methyltransferase activity"/>
    <property type="evidence" value="ECO:0007669"/>
    <property type="project" value="UniProtKB-UniRule"/>
</dbReference>
<dbReference type="GO" id="GO:0032259">
    <property type="term" value="P:methylation"/>
    <property type="evidence" value="ECO:0007669"/>
    <property type="project" value="UniProtKB-KW"/>
</dbReference>
<dbReference type="GO" id="GO:0010038">
    <property type="term" value="P:response to metal ion"/>
    <property type="evidence" value="ECO:0007669"/>
    <property type="project" value="InterPro"/>
</dbReference>
<dbReference type="FunFam" id="3.40.50.150:FF:000101">
    <property type="entry name" value="Thiopurine S-methyltransferase"/>
    <property type="match status" value="1"/>
</dbReference>
<dbReference type="Gene3D" id="3.40.50.150">
    <property type="entry name" value="Vaccinia Virus protein VP39"/>
    <property type="match status" value="1"/>
</dbReference>
<dbReference type="HAMAP" id="MF_00812">
    <property type="entry name" value="Thiopur_methtran"/>
    <property type="match status" value="1"/>
</dbReference>
<dbReference type="InterPro" id="IPR029063">
    <property type="entry name" value="SAM-dependent_MTases_sf"/>
</dbReference>
<dbReference type="InterPro" id="IPR022474">
    <property type="entry name" value="Thiopur_S-MeTfrase_Se/Te_detox"/>
</dbReference>
<dbReference type="InterPro" id="IPR025835">
    <property type="entry name" value="Thiopurine_S-MeTrfase"/>
</dbReference>
<dbReference type="InterPro" id="IPR008854">
    <property type="entry name" value="TPMT"/>
</dbReference>
<dbReference type="NCBIfam" id="NF009732">
    <property type="entry name" value="PRK13255.1"/>
    <property type="match status" value="1"/>
</dbReference>
<dbReference type="NCBIfam" id="TIGR03840">
    <property type="entry name" value="TMPT_Se_Te"/>
    <property type="match status" value="1"/>
</dbReference>
<dbReference type="PANTHER" id="PTHR10259">
    <property type="entry name" value="THIOPURINE S-METHYLTRANSFERASE"/>
    <property type="match status" value="1"/>
</dbReference>
<dbReference type="PANTHER" id="PTHR10259:SF11">
    <property type="entry name" value="THIOPURINE S-METHYLTRANSFERASE"/>
    <property type="match status" value="1"/>
</dbReference>
<dbReference type="Pfam" id="PF05724">
    <property type="entry name" value="TPMT"/>
    <property type="match status" value="1"/>
</dbReference>
<dbReference type="PIRSF" id="PIRSF023956">
    <property type="entry name" value="Thiopurine_S-methyltransferase"/>
    <property type="match status" value="1"/>
</dbReference>
<dbReference type="SUPFAM" id="SSF53335">
    <property type="entry name" value="S-adenosyl-L-methionine-dependent methyltransferases"/>
    <property type="match status" value="1"/>
</dbReference>
<dbReference type="PROSITE" id="PS51585">
    <property type="entry name" value="SAM_MT_TPMT"/>
    <property type="match status" value="1"/>
</dbReference>
<gene>
    <name evidence="1" type="primary">tpm</name>
    <name type="ordered locus">PSPA7_2323</name>
</gene>
<comment type="catalytic activity">
    <reaction evidence="1">
        <text>S-adenosyl-L-methionine + a thiopurine = S-adenosyl-L-homocysteine + a thiopurine S-methylether.</text>
        <dbReference type="EC" id="2.1.1.67"/>
    </reaction>
</comment>
<comment type="subcellular location">
    <subcellularLocation>
        <location evidence="1">Cytoplasm</location>
    </subcellularLocation>
</comment>
<comment type="similarity">
    <text evidence="1">Belongs to the class I-like SAM-binding methyltransferase superfamily. TPMT family.</text>
</comment>
<proteinExistence type="inferred from homology"/>
<reference key="1">
    <citation type="submission" date="2007-06" db="EMBL/GenBank/DDBJ databases">
        <authorList>
            <person name="Dodson R.J."/>
            <person name="Harkins D."/>
            <person name="Paulsen I.T."/>
        </authorList>
    </citation>
    <scope>NUCLEOTIDE SEQUENCE [LARGE SCALE GENOMIC DNA]</scope>
    <source>
        <strain>DSM 24068 / PA7</strain>
    </source>
</reference>
<protein>
    <recommendedName>
        <fullName evidence="1">Thiopurine S-methyltransferase</fullName>
        <ecNumber evidence="1">2.1.1.67</ecNumber>
    </recommendedName>
    <alternativeName>
        <fullName evidence="1">Thiopurine methyltransferase</fullName>
    </alternativeName>
</protein>
<accession>A6V3Q8</accession>